<sequence>MTNYKIDFSKGLVPAILQDNQTKQVLMLGYMNQEAFDKTIEDGVVCFYSRSKQRLWTKGETSGHTQRVKDIHVDCDNDTILIDVIPNGPTCHTGSQSCFNTEVPFSVQTLAQTVQDSAQSNNEKSYTKYLLTEGIEKITKKYGEEAFEVVIEAIKGDKKAFVSEVADELYHLFVLMHALGVDFSEIEAELARRHHKRNNFKGERQNIEQW</sequence>
<proteinExistence type="inferred from homology"/>
<keyword id="KW-0028">Amino-acid biosynthesis</keyword>
<keyword id="KW-0067">ATP-binding</keyword>
<keyword id="KW-0963">Cytoplasm</keyword>
<keyword id="KW-0368">Histidine biosynthesis</keyword>
<keyword id="KW-0378">Hydrolase</keyword>
<keyword id="KW-0511">Multifunctional enzyme</keyword>
<keyword id="KW-0547">Nucleotide-binding</keyword>
<name>HIS2_STAAR</name>
<accession>Q6GDD2</accession>
<evidence type="ECO:0000250" key="1"/>
<evidence type="ECO:0000305" key="2"/>
<reference key="1">
    <citation type="journal article" date="2004" name="Proc. Natl. Acad. Sci. U.S.A.">
        <title>Complete genomes of two clinical Staphylococcus aureus strains: evidence for the rapid evolution of virulence and drug resistance.</title>
        <authorList>
            <person name="Holden M.T.G."/>
            <person name="Feil E.J."/>
            <person name="Lindsay J.A."/>
            <person name="Peacock S.J."/>
            <person name="Day N.P.J."/>
            <person name="Enright M.C."/>
            <person name="Foster T.J."/>
            <person name="Moore C.E."/>
            <person name="Hurst L."/>
            <person name="Atkin R."/>
            <person name="Barron A."/>
            <person name="Bason N."/>
            <person name="Bentley S.D."/>
            <person name="Chillingworth C."/>
            <person name="Chillingworth T."/>
            <person name="Churcher C."/>
            <person name="Clark L."/>
            <person name="Corton C."/>
            <person name="Cronin A."/>
            <person name="Doggett J."/>
            <person name="Dowd L."/>
            <person name="Feltwell T."/>
            <person name="Hance Z."/>
            <person name="Harris B."/>
            <person name="Hauser H."/>
            <person name="Holroyd S."/>
            <person name="Jagels K."/>
            <person name="James K.D."/>
            <person name="Lennard N."/>
            <person name="Line A."/>
            <person name="Mayes R."/>
            <person name="Moule S."/>
            <person name="Mungall K."/>
            <person name="Ormond D."/>
            <person name="Quail M.A."/>
            <person name="Rabbinowitsch E."/>
            <person name="Rutherford K.M."/>
            <person name="Sanders M."/>
            <person name="Sharp S."/>
            <person name="Simmonds M."/>
            <person name="Stevens K."/>
            <person name="Whitehead S."/>
            <person name="Barrell B.G."/>
            <person name="Spratt B.G."/>
            <person name="Parkhill J."/>
        </authorList>
    </citation>
    <scope>NUCLEOTIDE SEQUENCE [LARGE SCALE GENOMIC DNA]</scope>
    <source>
        <strain>MRSA252</strain>
    </source>
</reference>
<comment type="catalytic activity">
    <reaction>
        <text>1-(5-phospho-beta-D-ribosyl)-ATP + H2O = 1-(5-phospho-beta-D-ribosyl)-5'-AMP + diphosphate + H(+)</text>
        <dbReference type="Rhea" id="RHEA:22828"/>
        <dbReference type="ChEBI" id="CHEBI:15377"/>
        <dbReference type="ChEBI" id="CHEBI:15378"/>
        <dbReference type="ChEBI" id="CHEBI:33019"/>
        <dbReference type="ChEBI" id="CHEBI:59457"/>
        <dbReference type="ChEBI" id="CHEBI:73183"/>
        <dbReference type="EC" id="3.6.1.31"/>
    </reaction>
</comment>
<comment type="catalytic activity">
    <reaction>
        <text>1-(5-phospho-beta-D-ribosyl)-5'-AMP + H2O = 1-(5-phospho-beta-D-ribosyl)-5-[(5-phospho-beta-D-ribosylamino)methylideneamino]imidazole-4-carboxamide</text>
        <dbReference type="Rhea" id="RHEA:20049"/>
        <dbReference type="ChEBI" id="CHEBI:15377"/>
        <dbReference type="ChEBI" id="CHEBI:58435"/>
        <dbReference type="ChEBI" id="CHEBI:59457"/>
        <dbReference type="EC" id="3.5.4.19"/>
    </reaction>
</comment>
<comment type="pathway">
    <text>Amino-acid biosynthesis; L-histidine biosynthesis; L-histidine from 5-phospho-alpha-D-ribose 1-diphosphate: step 2/9.</text>
</comment>
<comment type="pathway">
    <text>Amino-acid biosynthesis; L-histidine biosynthesis; L-histidine from 5-phospho-alpha-D-ribose 1-diphosphate: step 3/9.</text>
</comment>
<comment type="subcellular location">
    <subcellularLocation>
        <location evidence="1">Cytoplasm</location>
    </subcellularLocation>
</comment>
<comment type="similarity">
    <text evidence="2">In the N-terminal section; belongs to the PRA-CH family.</text>
</comment>
<comment type="similarity">
    <text evidence="2">In the C-terminal section; belongs to the PRA-PH family.</text>
</comment>
<gene>
    <name type="primary">hisI</name>
    <name type="synonym">hisIE</name>
    <name type="ordered locus">SAR2754</name>
</gene>
<dbReference type="EC" id="3.5.4.19"/>
<dbReference type="EC" id="3.6.1.31"/>
<dbReference type="EMBL" id="BX571856">
    <property type="protein sequence ID" value="CAG41729.1"/>
    <property type="molecule type" value="Genomic_DNA"/>
</dbReference>
<dbReference type="SMR" id="Q6GDD2"/>
<dbReference type="KEGG" id="sar:SAR2754"/>
<dbReference type="HOGENOM" id="CLU_048577_3_1_9"/>
<dbReference type="UniPathway" id="UPA00031">
    <property type="reaction ID" value="UER00007"/>
</dbReference>
<dbReference type="UniPathway" id="UPA00031">
    <property type="reaction ID" value="UER00008"/>
</dbReference>
<dbReference type="Proteomes" id="UP000000596">
    <property type="component" value="Chromosome"/>
</dbReference>
<dbReference type="GO" id="GO:0005737">
    <property type="term" value="C:cytoplasm"/>
    <property type="evidence" value="ECO:0007669"/>
    <property type="project" value="UniProtKB-SubCell"/>
</dbReference>
<dbReference type="GO" id="GO:0005524">
    <property type="term" value="F:ATP binding"/>
    <property type="evidence" value="ECO:0007669"/>
    <property type="project" value="UniProtKB-KW"/>
</dbReference>
<dbReference type="GO" id="GO:0004635">
    <property type="term" value="F:phosphoribosyl-AMP cyclohydrolase activity"/>
    <property type="evidence" value="ECO:0007669"/>
    <property type="project" value="UniProtKB-UniRule"/>
</dbReference>
<dbReference type="GO" id="GO:0004636">
    <property type="term" value="F:phosphoribosyl-ATP diphosphatase activity"/>
    <property type="evidence" value="ECO:0007669"/>
    <property type="project" value="UniProtKB-UniRule"/>
</dbReference>
<dbReference type="GO" id="GO:0000105">
    <property type="term" value="P:L-histidine biosynthetic process"/>
    <property type="evidence" value="ECO:0007669"/>
    <property type="project" value="UniProtKB-UniRule"/>
</dbReference>
<dbReference type="CDD" id="cd11534">
    <property type="entry name" value="NTP-PPase_HisIE_like"/>
    <property type="match status" value="1"/>
</dbReference>
<dbReference type="FunFam" id="3.10.20.810:FF:000001">
    <property type="entry name" value="Histidine biosynthesis bifunctional protein HisIE"/>
    <property type="match status" value="1"/>
</dbReference>
<dbReference type="Gene3D" id="1.10.287.1080">
    <property type="entry name" value="MazG-like"/>
    <property type="match status" value="1"/>
</dbReference>
<dbReference type="Gene3D" id="3.10.20.810">
    <property type="entry name" value="Phosphoribosyl-AMP cyclohydrolase"/>
    <property type="match status" value="1"/>
</dbReference>
<dbReference type="HAMAP" id="MF_01020">
    <property type="entry name" value="HisE"/>
    <property type="match status" value="1"/>
</dbReference>
<dbReference type="HAMAP" id="MF_01021">
    <property type="entry name" value="HisI"/>
    <property type="match status" value="1"/>
</dbReference>
<dbReference type="HAMAP" id="MF_01019">
    <property type="entry name" value="HisIE"/>
    <property type="match status" value="1"/>
</dbReference>
<dbReference type="InterPro" id="IPR023019">
    <property type="entry name" value="His_synth_HisIE"/>
</dbReference>
<dbReference type="InterPro" id="IPR008179">
    <property type="entry name" value="HisE"/>
</dbReference>
<dbReference type="InterPro" id="IPR026660">
    <property type="entry name" value="PRA-CH"/>
</dbReference>
<dbReference type="InterPro" id="IPR021130">
    <property type="entry name" value="PRib-ATP_PPHydrolase-like"/>
</dbReference>
<dbReference type="InterPro" id="IPR002496">
    <property type="entry name" value="PRib_AMP_CycHydrolase_dom"/>
</dbReference>
<dbReference type="InterPro" id="IPR038019">
    <property type="entry name" value="PRib_AMP_CycHydrolase_sf"/>
</dbReference>
<dbReference type="NCBIfam" id="TIGR03188">
    <property type="entry name" value="histidine_hisI"/>
    <property type="match status" value="1"/>
</dbReference>
<dbReference type="NCBIfam" id="NF000768">
    <property type="entry name" value="PRK00051.1"/>
    <property type="match status" value="1"/>
</dbReference>
<dbReference type="NCBIfam" id="NF002747">
    <property type="entry name" value="PRK02759.1"/>
    <property type="match status" value="1"/>
</dbReference>
<dbReference type="PANTHER" id="PTHR42945">
    <property type="entry name" value="HISTIDINE BIOSYNTHESIS BIFUNCTIONAL PROTEIN"/>
    <property type="match status" value="1"/>
</dbReference>
<dbReference type="PANTHER" id="PTHR42945:SF9">
    <property type="entry name" value="HISTIDINE BIOSYNTHESIS BIFUNCTIONAL PROTEIN HISIE"/>
    <property type="match status" value="1"/>
</dbReference>
<dbReference type="Pfam" id="PF01502">
    <property type="entry name" value="PRA-CH"/>
    <property type="match status" value="1"/>
</dbReference>
<dbReference type="Pfam" id="PF01503">
    <property type="entry name" value="PRA-PH"/>
    <property type="match status" value="1"/>
</dbReference>
<dbReference type="SUPFAM" id="SSF101386">
    <property type="entry name" value="all-alpha NTP pyrophosphatases"/>
    <property type="match status" value="1"/>
</dbReference>
<dbReference type="SUPFAM" id="SSF141734">
    <property type="entry name" value="HisI-like"/>
    <property type="match status" value="1"/>
</dbReference>
<protein>
    <recommendedName>
        <fullName>Histidine biosynthesis bifunctional protein HisIE</fullName>
    </recommendedName>
    <domain>
        <recommendedName>
            <fullName>Phosphoribosyl-AMP cyclohydrolase</fullName>
            <shortName>PRA-CH</shortName>
            <ecNumber>3.5.4.19</ecNumber>
        </recommendedName>
    </domain>
    <domain>
        <recommendedName>
            <fullName>Phosphoribosyl-ATP pyrophosphatase</fullName>
            <shortName>PRA-PH</shortName>
            <ecNumber>3.6.1.31</ecNumber>
        </recommendedName>
    </domain>
</protein>
<organism>
    <name type="scientific">Staphylococcus aureus (strain MRSA252)</name>
    <dbReference type="NCBI Taxonomy" id="282458"/>
    <lineage>
        <taxon>Bacteria</taxon>
        <taxon>Bacillati</taxon>
        <taxon>Bacillota</taxon>
        <taxon>Bacilli</taxon>
        <taxon>Bacillales</taxon>
        <taxon>Staphylococcaceae</taxon>
        <taxon>Staphylococcus</taxon>
    </lineage>
</organism>
<feature type="chain" id="PRO_0000136433" description="Histidine biosynthesis bifunctional protein HisIE">
    <location>
        <begin position="1"/>
        <end position="210"/>
    </location>
</feature>
<feature type="region of interest" description="Phosphoribosyl-AMP cyclohydrolase">
    <location>
        <begin position="1"/>
        <end position="106"/>
    </location>
</feature>
<feature type="region of interest" description="Phosphoribosyl-ATP pyrophosphohydrolase">
    <location>
        <begin position="107"/>
        <end position="210"/>
    </location>
</feature>